<gene>
    <name type="primary">GMH1</name>
    <name type="synonym">MSG1</name>
    <name type="ordered locus">YKR030W</name>
</gene>
<proteinExistence type="evidence at protein level"/>
<comment type="subunit">
    <text evidence="3">Interacts with GEA1 and GEA2.</text>
</comment>
<comment type="subcellular location">
    <subcellularLocation>
        <location evidence="3">Golgi apparatus membrane</location>
        <topology evidence="3">Multi-pass membrane protein</topology>
    </subcellularLocation>
    <subcellularLocation>
        <location evidence="3">Endoplasmic reticulum membrane</location>
        <topology evidence="3">Multi-pass membrane protein</topology>
    </subcellularLocation>
    <text>Recycles between Golgi apparatus and endoplasmic reticulum.</text>
</comment>
<comment type="similarity">
    <text evidence="4">Belongs to the unc-50 family.</text>
</comment>
<accession>P36125</accession>
<accession>D6VX95</accession>
<feature type="initiator methionine" description="Removed" evidence="5">
    <location>
        <position position="1"/>
    </location>
</feature>
<feature type="chain" id="PRO_0000203205" description="Protein GMH1">
    <location>
        <begin position="2"/>
        <end position="273"/>
    </location>
</feature>
<feature type="topological domain" description="Cytoplasmic" evidence="1">
    <location>
        <begin position="2"/>
        <end position="89"/>
    </location>
</feature>
<feature type="transmembrane region" description="Helical" evidence="1">
    <location>
        <begin position="90"/>
        <end position="110"/>
    </location>
</feature>
<feature type="topological domain" description="Lumenal" evidence="1">
    <location>
        <begin position="111"/>
        <end position="134"/>
    </location>
</feature>
<feature type="transmembrane region" description="Helical" evidence="1">
    <location>
        <begin position="135"/>
        <end position="155"/>
    </location>
</feature>
<feature type="topological domain" description="Cytoplasmic" evidence="1">
    <location>
        <begin position="156"/>
        <end position="175"/>
    </location>
</feature>
<feature type="transmembrane region" description="Helical" evidence="1">
    <location>
        <begin position="176"/>
        <end position="196"/>
    </location>
</feature>
<feature type="topological domain" description="Lumenal" evidence="1">
    <location>
        <begin position="197"/>
        <end position="216"/>
    </location>
</feature>
<feature type="transmembrane region" description="Helical" evidence="1">
    <location>
        <begin position="217"/>
        <end position="237"/>
    </location>
</feature>
<feature type="topological domain" description="Cytoplasmic" evidence="1">
    <location>
        <begin position="238"/>
        <end position="242"/>
    </location>
</feature>
<feature type="transmembrane region" description="Helical" evidence="1">
    <location>
        <begin position="243"/>
        <end position="263"/>
    </location>
</feature>
<feature type="topological domain" description="Lumenal" evidence="1">
    <location>
        <begin position="264"/>
        <end position="273"/>
    </location>
</feature>
<feature type="region of interest" description="Disordered" evidence="2">
    <location>
        <begin position="1"/>
        <end position="33"/>
    </location>
</feature>
<feature type="modified residue" description="N-acetylserine" evidence="5">
    <location>
        <position position="2"/>
    </location>
</feature>
<evidence type="ECO:0000255" key="1"/>
<evidence type="ECO:0000256" key="2">
    <source>
        <dbReference type="SAM" id="MobiDB-lite"/>
    </source>
</evidence>
<evidence type="ECO:0000269" key="3">
    <source>
    </source>
</evidence>
<evidence type="ECO:0000305" key="4"/>
<evidence type="ECO:0007744" key="5">
    <source>
    </source>
</evidence>
<reference key="1">
    <citation type="journal article" date="1994" name="Nature">
        <title>Complete DNA sequence of yeast chromosome XI.</title>
        <authorList>
            <person name="Dujon B."/>
            <person name="Alexandraki D."/>
            <person name="Andre B."/>
            <person name="Ansorge W."/>
            <person name="Baladron V."/>
            <person name="Ballesta J.P.G."/>
            <person name="Banrevi A."/>
            <person name="Bolle P.-A."/>
            <person name="Bolotin-Fukuhara M."/>
            <person name="Bossier P."/>
            <person name="Bou G."/>
            <person name="Boyer J."/>
            <person name="Buitrago M.J."/>
            <person name="Cheret G."/>
            <person name="Colleaux L."/>
            <person name="Daignan-Fornier B."/>
            <person name="del Rey F."/>
            <person name="Dion C."/>
            <person name="Domdey H."/>
            <person name="Duesterhoeft A."/>
            <person name="Duesterhus S."/>
            <person name="Entian K.-D."/>
            <person name="Erfle H."/>
            <person name="Esteban P.F."/>
            <person name="Feldmann H."/>
            <person name="Fernandes L."/>
            <person name="Fobo G.M."/>
            <person name="Fritz C."/>
            <person name="Fukuhara H."/>
            <person name="Gabel C."/>
            <person name="Gaillon L."/>
            <person name="Garcia-Cantalejo J.M."/>
            <person name="Garcia-Ramirez J.J."/>
            <person name="Gent M.E."/>
            <person name="Ghazvini M."/>
            <person name="Goffeau A."/>
            <person name="Gonzalez A."/>
            <person name="Grothues D."/>
            <person name="Guerreiro P."/>
            <person name="Hegemann J.H."/>
            <person name="Hewitt N."/>
            <person name="Hilger F."/>
            <person name="Hollenberg C.P."/>
            <person name="Horaitis O."/>
            <person name="Indge K.J."/>
            <person name="Jacquier A."/>
            <person name="James C.M."/>
            <person name="Jauniaux J.-C."/>
            <person name="Jimenez A."/>
            <person name="Keuchel H."/>
            <person name="Kirchrath L."/>
            <person name="Kleine K."/>
            <person name="Koetter P."/>
            <person name="Legrain P."/>
            <person name="Liebl S."/>
            <person name="Louis E.J."/>
            <person name="Maia e Silva A."/>
            <person name="Marck C."/>
            <person name="Monnier A.-L."/>
            <person name="Moestl D."/>
            <person name="Mueller S."/>
            <person name="Obermaier B."/>
            <person name="Oliver S.G."/>
            <person name="Pallier C."/>
            <person name="Pascolo S."/>
            <person name="Pfeiffer F."/>
            <person name="Philippsen P."/>
            <person name="Planta R.J."/>
            <person name="Pohl F.M."/>
            <person name="Pohl T.M."/>
            <person name="Poehlmann R."/>
            <person name="Portetelle D."/>
            <person name="Purnelle B."/>
            <person name="Puzos V."/>
            <person name="Ramezani Rad M."/>
            <person name="Rasmussen S.W."/>
            <person name="Remacha M.A."/>
            <person name="Revuelta J.L."/>
            <person name="Richard G.-F."/>
            <person name="Rieger M."/>
            <person name="Rodrigues-Pousada C."/>
            <person name="Rose M."/>
            <person name="Rupp T."/>
            <person name="Santos M.A."/>
            <person name="Schwager C."/>
            <person name="Sensen C."/>
            <person name="Skala J."/>
            <person name="Soares H."/>
            <person name="Sor F."/>
            <person name="Stegemann J."/>
            <person name="Tettelin H."/>
            <person name="Thierry A."/>
            <person name="Tzermia M."/>
            <person name="Urrestarazu L.A."/>
            <person name="van Dyck L."/>
            <person name="van Vliet-Reedijk J.C."/>
            <person name="Valens M."/>
            <person name="Vandenbol M."/>
            <person name="Vilela C."/>
            <person name="Vissers S."/>
            <person name="von Wettstein D."/>
            <person name="Voss H."/>
            <person name="Wiemann S."/>
            <person name="Xu G."/>
            <person name="Zimmermann J."/>
            <person name="Haasemann M."/>
            <person name="Becker I."/>
            <person name="Mewes H.-W."/>
        </authorList>
    </citation>
    <scope>NUCLEOTIDE SEQUENCE [LARGE SCALE GENOMIC DNA]</scope>
    <source>
        <strain>ATCC 204508 / S288c</strain>
    </source>
</reference>
<reference key="2">
    <citation type="journal article" date="2014" name="G3 (Bethesda)">
        <title>The reference genome sequence of Saccharomyces cerevisiae: Then and now.</title>
        <authorList>
            <person name="Engel S.R."/>
            <person name="Dietrich F.S."/>
            <person name="Fisk D.G."/>
            <person name="Binkley G."/>
            <person name="Balakrishnan R."/>
            <person name="Costanzo M.C."/>
            <person name="Dwight S.S."/>
            <person name="Hitz B.C."/>
            <person name="Karra K."/>
            <person name="Nash R.S."/>
            <person name="Weng S."/>
            <person name="Wong E.D."/>
            <person name="Lloyd P."/>
            <person name="Skrzypek M.S."/>
            <person name="Miyasato S.R."/>
            <person name="Simison M."/>
            <person name="Cherry J.M."/>
        </authorList>
    </citation>
    <scope>GENOME REANNOTATION</scope>
    <source>
        <strain>ATCC 204508 / S288c</strain>
    </source>
</reference>
<reference key="3">
    <citation type="journal article" date="2003" name="Mol. Biol. Cell">
        <title>A novel Golgi membrane protein is a partner of the ARF exchange factors Gea1p and Gea2p.</title>
        <authorList>
            <person name="Chantalat S."/>
            <person name="Courbeyrette R."/>
            <person name="Senic-Matuglia F."/>
            <person name="Jackson C.L."/>
            <person name="Goud B."/>
            <person name="Peyroche A."/>
        </authorList>
    </citation>
    <scope>IDENTIFICATION</scope>
    <scope>SUBCELLULAR LOCATION</scope>
    <scope>TOPOLOGY</scope>
    <scope>INTERACTION WITH GEA1 AND GEA2</scope>
</reference>
<reference key="4">
    <citation type="journal article" date="2006" name="Proc. Natl. Acad. Sci. U.S.A.">
        <title>A global topology map of the Saccharomyces cerevisiae membrane proteome.</title>
        <authorList>
            <person name="Kim H."/>
            <person name="Melen K."/>
            <person name="Oesterberg M."/>
            <person name="von Heijne G."/>
        </authorList>
    </citation>
    <scope>TOPOLOGY [LARGE SCALE ANALYSIS]</scope>
    <source>
        <strain>ATCC 208353 / W303-1A</strain>
    </source>
</reference>
<reference key="5">
    <citation type="journal article" date="2012" name="Proc. Natl. Acad. Sci. U.S.A.">
        <title>N-terminal acetylome analyses and functional insights of the N-terminal acetyltransferase NatB.</title>
        <authorList>
            <person name="Van Damme P."/>
            <person name="Lasa M."/>
            <person name="Polevoda B."/>
            <person name="Gazquez C."/>
            <person name="Elosegui-Artola A."/>
            <person name="Kim D.S."/>
            <person name="De Juan-Pardo E."/>
            <person name="Demeyer K."/>
            <person name="Hole K."/>
            <person name="Larrea E."/>
            <person name="Timmerman E."/>
            <person name="Prieto J."/>
            <person name="Arnesen T."/>
            <person name="Sherman F."/>
            <person name="Gevaert K."/>
            <person name="Aldabe R."/>
        </authorList>
    </citation>
    <scope>ACETYLATION [LARGE SCALE ANALYSIS] AT SER-2</scope>
    <scope>CLEAVAGE OF INITIATOR METHIONINE [LARGE SCALE ANALYSIS]</scope>
    <scope>IDENTIFICATION BY MASS SPECTROMETRY [LARGE SCALE ANALYSIS]</scope>
</reference>
<organism>
    <name type="scientific">Saccharomyces cerevisiae (strain ATCC 204508 / S288c)</name>
    <name type="common">Baker's yeast</name>
    <dbReference type="NCBI Taxonomy" id="559292"/>
    <lineage>
        <taxon>Eukaryota</taxon>
        <taxon>Fungi</taxon>
        <taxon>Dikarya</taxon>
        <taxon>Ascomycota</taxon>
        <taxon>Saccharomycotina</taxon>
        <taxon>Saccharomycetes</taxon>
        <taxon>Saccharomycetales</taxon>
        <taxon>Saccharomycetaceae</taxon>
        <taxon>Saccharomyces</taxon>
    </lineage>
</organism>
<protein>
    <recommendedName>
        <fullName>Protein GMH1</fullName>
    </recommendedName>
    <alternativeName>
        <fullName>GEA1-6 membrane-associated high-copy suppressor protein 1</fullName>
    </alternativeName>
</protein>
<name>GMH1_YEAST</name>
<dbReference type="EMBL" id="Z28255">
    <property type="protein sequence ID" value="CAA82102.1"/>
    <property type="molecule type" value="Genomic_DNA"/>
</dbReference>
<dbReference type="EMBL" id="BK006944">
    <property type="protein sequence ID" value="DAA09185.1"/>
    <property type="molecule type" value="Genomic_DNA"/>
</dbReference>
<dbReference type="PIR" id="S38102">
    <property type="entry name" value="S38102"/>
</dbReference>
<dbReference type="RefSeq" id="NP_012955.1">
    <property type="nucleotide sequence ID" value="NM_001179820.1"/>
</dbReference>
<dbReference type="BioGRID" id="34163">
    <property type="interactions" value="105"/>
</dbReference>
<dbReference type="DIP" id="DIP-2023N"/>
<dbReference type="FunCoup" id="P36125">
    <property type="interactions" value="733"/>
</dbReference>
<dbReference type="IntAct" id="P36125">
    <property type="interactions" value="9"/>
</dbReference>
<dbReference type="MINT" id="P36125"/>
<dbReference type="STRING" id="4932.YKR030W"/>
<dbReference type="iPTMnet" id="P36125"/>
<dbReference type="PaxDb" id="4932-YKR030W"/>
<dbReference type="PeptideAtlas" id="P36125"/>
<dbReference type="EnsemblFungi" id="YKR030W_mRNA">
    <property type="protein sequence ID" value="YKR030W"/>
    <property type="gene ID" value="YKR030W"/>
</dbReference>
<dbReference type="GeneID" id="853901"/>
<dbReference type="KEGG" id="sce:YKR030W"/>
<dbReference type="AGR" id="SGD:S000001738"/>
<dbReference type="SGD" id="S000001738">
    <property type="gene designation" value="GMH1"/>
</dbReference>
<dbReference type="VEuPathDB" id="FungiDB:YKR030W"/>
<dbReference type="eggNOG" id="KOG3012">
    <property type="taxonomic scope" value="Eukaryota"/>
</dbReference>
<dbReference type="GeneTree" id="ENSGT00390000018553"/>
<dbReference type="HOGENOM" id="CLU_066239_1_2_1"/>
<dbReference type="InParanoid" id="P36125"/>
<dbReference type="OMA" id="ETAIWEM"/>
<dbReference type="OrthoDB" id="10027013at2759"/>
<dbReference type="BioCyc" id="YEAST:G3O-32006-MONOMER"/>
<dbReference type="BioGRID-ORCS" id="853901">
    <property type="hits" value="0 hits in 10 CRISPR screens"/>
</dbReference>
<dbReference type="PRO" id="PR:P36125"/>
<dbReference type="Proteomes" id="UP000002311">
    <property type="component" value="Chromosome XI"/>
</dbReference>
<dbReference type="RNAct" id="P36125">
    <property type="molecule type" value="protein"/>
</dbReference>
<dbReference type="GO" id="GO:0005789">
    <property type="term" value="C:endoplasmic reticulum membrane"/>
    <property type="evidence" value="ECO:0007669"/>
    <property type="project" value="UniProtKB-SubCell"/>
</dbReference>
<dbReference type="GO" id="GO:0000139">
    <property type="term" value="C:Golgi membrane"/>
    <property type="evidence" value="ECO:0000314"/>
    <property type="project" value="SGD"/>
</dbReference>
<dbReference type="GO" id="GO:0016192">
    <property type="term" value="P:vesicle-mediated transport"/>
    <property type="evidence" value="ECO:0000353"/>
    <property type="project" value="SGD"/>
</dbReference>
<dbReference type="InterPro" id="IPR007881">
    <property type="entry name" value="UNC-50"/>
</dbReference>
<dbReference type="PANTHER" id="PTHR12841">
    <property type="entry name" value="PROTEIN UNC-50 HOMOLOG"/>
    <property type="match status" value="1"/>
</dbReference>
<dbReference type="PANTHER" id="PTHR12841:SF6">
    <property type="entry name" value="PROTEIN UNC-50 HOMOLOG"/>
    <property type="match status" value="1"/>
</dbReference>
<dbReference type="Pfam" id="PF05216">
    <property type="entry name" value="UNC-50"/>
    <property type="match status" value="1"/>
</dbReference>
<sequence>MSYLPTYSNDLPAGPQGQRRRNNGNENDARQGYGQQSVPMVIRRLFKTPKNLDLETASWEMFHLIFHPRKAYRSIYYQRQTKNQWARDDPSFFIFQIALISLSSIIWSIYNSGFNNDSDMGALSIIGHFFKSLVMMVILDFFIFGFIMATIFYLLLNRSHFKFKSSQNSVVEWAYCFDVHCNSFLIILLCLYFIQFLLLPIINLQNWISLLIGNSLYCFAIGHYFILTFYGYNQLPFLKNLNFILLPTLGLSIIYLISLFGIDLSKKLSFYNY</sequence>
<keyword id="KW-0007">Acetylation</keyword>
<keyword id="KW-0256">Endoplasmic reticulum</keyword>
<keyword id="KW-0333">Golgi apparatus</keyword>
<keyword id="KW-0472">Membrane</keyword>
<keyword id="KW-1185">Reference proteome</keyword>
<keyword id="KW-0812">Transmembrane</keyword>
<keyword id="KW-1133">Transmembrane helix</keyword>